<accession>Q5L5M3</accession>
<comment type="function">
    <text evidence="1">Is required not only for elongation of protein synthesis but also for the initiation of all mRNA translation through initiator tRNA(fMet) aminoacylation.</text>
</comment>
<comment type="catalytic activity">
    <reaction evidence="1">
        <text>tRNA(Met) + L-methionine + ATP = L-methionyl-tRNA(Met) + AMP + diphosphate</text>
        <dbReference type="Rhea" id="RHEA:13481"/>
        <dbReference type="Rhea" id="RHEA-COMP:9667"/>
        <dbReference type="Rhea" id="RHEA-COMP:9698"/>
        <dbReference type="ChEBI" id="CHEBI:30616"/>
        <dbReference type="ChEBI" id="CHEBI:33019"/>
        <dbReference type="ChEBI" id="CHEBI:57844"/>
        <dbReference type="ChEBI" id="CHEBI:78442"/>
        <dbReference type="ChEBI" id="CHEBI:78530"/>
        <dbReference type="ChEBI" id="CHEBI:456215"/>
        <dbReference type="EC" id="6.1.1.10"/>
    </reaction>
</comment>
<comment type="cofactor">
    <cofactor evidence="1">
        <name>Zn(2+)</name>
        <dbReference type="ChEBI" id="CHEBI:29105"/>
    </cofactor>
    <text evidence="1">Binds 1 zinc ion per subunit.</text>
</comment>
<comment type="subunit">
    <text evidence="1">Monomer.</text>
</comment>
<comment type="subcellular location">
    <subcellularLocation>
        <location evidence="1">Cytoplasm</location>
    </subcellularLocation>
</comment>
<comment type="similarity">
    <text evidence="1">Belongs to the class-I aminoacyl-tRNA synthetase family. MetG type 1 subfamily.</text>
</comment>
<organism>
    <name type="scientific">Chlamydia abortus (strain DSM 27085 / S26/3)</name>
    <name type="common">Chlamydophila abortus</name>
    <dbReference type="NCBI Taxonomy" id="218497"/>
    <lineage>
        <taxon>Bacteria</taxon>
        <taxon>Pseudomonadati</taxon>
        <taxon>Chlamydiota</taxon>
        <taxon>Chlamydiia</taxon>
        <taxon>Chlamydiales</taxon>
        <taxon>Chlamydiaceae</taxon>
        <taxon>Chlamydia/Chlamydophila group</taxon>
        <taxon>Chlamydia</taxon>
    </lineage>
</organism>
<feature type="chain" id="PRO_0000139118" description="Methionine--tRNA ligase">
    <location>
        <begin position="1"/>
        <end position="551"/>
    </location>
</feature>
<feature type="short sequence motif" description="'HIGH' region">
    <location>
        <begin position="12"/>
        <end position="22"/>
    </location>
</feature>
<feature type="short sequence motif" description="'KMSKS' region">
    <location>
        <begin position="330"/>
        <end position="334"/>
    </location>
</feature>
<feature type="binding site" evidence="1">
    <location>
        <position position="144"/>
    </location>
    <ligand>
        <name>Zn(2+)</name>
        <dbReference type="ChEBI" id="CHEBI:29105"/>
    </ligand>
</feature>
<feature type="binding site" evidence="1">
    <location>
        <position position="147"/>
    </location>
    <ligand>
        <name>Zn(2+)</name>
        <dbReference type="ChEBI" id="CHEBI:29105"/>
    </ligand>
</feature>
<feature type="binding site" evidence="1">
    <location>
        <position position="157"/>
    </location>
    <ligand>
        <name>Zn(2+)</name>
        <dbReference type="ChEBI" id="CHEBI:29105"/>
    </ligand>
</feature>
<feature type="binding site" evidence="1">
    <location>
        <position position="160"/>
    </location>
    <ligand>
        <name>Zn(2+)</name>
        <dbReference type="ChEBI" id="CHEBI:29105"/>
    </ligand>
</feature>
<feature type="binding site" evidence="1">
    <location>
        <position position="333"/>
    </location>
    <ligand>
        <name>ATP</name>
        <dbReference type="ChEBI" id="CHEBI:30616"/>
    </ligand>
</feature>
<protein>
    <recommendedName>
        <fullName evidence="1">Methionine--tRNA ligase</fullName>
        <ecNumber evidence="1">6.1.1.10</ecNumber>
    </recommendedName>
    <alternativeName>
        <fullName evidence="1">Methionyl-tRNA synthetase</fullName>
        <shortName evidence="1">MetRS</shortName>
    </alternativeName>
</protein>
<keyword id="KW-0030">Aminoacyl-tRNA synthetase</keyword>
<keyword id="KW-0067">ATP-binding</keyword>
<keyword id="KW-0963">Cytoplasm</keyword>
<keyword id="KW-0436">Ligase</keyword>
<keyword id="KW-0479">Metal-binding</keyword>
<keyword id="KW-0547">Nucleotide-binding</keyword>
<keyword id="KW-0648">Protein biosynthesis</keyword>
<keyword id="KW-0862">Zinc</keyword>
<name>SYM_CHLAB</name>
<gene>
    <name evidence="1" type="primary">metG</name>
    <name type="ordered locus">CAB622</name>
</gene>
<sequence length="551" mass="63170">MPSRVLITSALPYANGPLHFGHIAGAYLPADVYARFRRLLGDDVLYICGSDEYGIAITLNAERAGMGYQEYVNMYHKIHKDTFDKLGISIDFFSRTTNPFHKKLVQDFYTELQSKGLIENQISLQLYSEEENRFLADRYVEGTCPKCGFDGARGDECQKCGADYEATDLVHPRSKLSGSQLVLKETEHAFLHLERMVEPLLAYIDTCYLPEHIRKFVTDYIKNLRPRAITRDLSWGIPVPDFPNKVFYVWFDAPIGYISGTMDWAASLNTPEAWKDFWLEDSTEYVQFIGKDNIPFHAAIFPAMELGQSIPYKKMDALVSSEFYLLEGCQFSKSEGNYIDIDTFLDTYSLDKLRYVLAATAPETSDSEFTFMDFKTRCNSELVGKFGNFIHRVLVFAEKNGFKELAYSANLLEDQDKQFLDRAQQIVRDAQEHYSQYSLRKACCAIMELAALGNVYFNDQAPWKLLKEGLSHRVEAVLFCACYCQKLLALISYPIIPGTAWEIWRMLSPKSLQLDSLDKDRVVDLWNRELLNFSEEVFSLTAPQLLFTIVD</sequence>
<dbReference type="EC" id="6.1.1.10" evidence="1"/>
<dbReference type="EMBL" id="CR848038">
    <property type="protein sequence ID" value="CAH64068.1"/>
    <property type="molecule type" value="Genomic_DNA"/>
</dbReference>
<dbReference type="RefSeq" id="WP_011097212.1">
    <property type="nucleotide sequence ID" value="NC_004552.2"/>
</dbReference>
<dbReference type="SMR" id="Q5L5M3"/>
<dbReference type="KEGG" id="cab:CAB622"/>
<dbReference type="eggNOG" id="COG0143">
    <property type="taxonomic scope" value="Bacteria"/>
</dbReference>
<dbReference type="HOGENOM" id="CLU_009710_1_2_0"/>
<dbReference type="OrthoDB" id="9810191at2"/>
<dbReference type="Proteomes" id="UP000001012">
    <property type="component" value="Chromosome"/>
</dbReference>
<dbReference type="GO" id="GO:0005829">
    <property type="term" value="C:cytosol"/>
    <property type="evidence" value="ECO:0007669"/>
    <property type="project" value="TreeGrafter"/>
</dbReference>
<dbReference type="GO" id="GO:0005524">
    <property type="term" value="F:ATP binding"/>
    <property type="evidence" value="ECO:0007669"/>
    <property type="project" value="UniProtKB-UniRule"/>
</dbReference>
<dbReference type="GO" id="GO:0046872">
    <property type="term" value="F:metal ion binding"/>
    <property type="evidence" value="ECO:0007669"/>
    <property type="project" value="UniProtKB-KW"/>
</dbReference>
<dbReference type="GO" id="GO:0004825">
    <property type="term" value="F:methionine-tRNA ligase activity"/>
    <property type="evidence" value="ECO:0007669"/>
    <property type="project" value="UniProtKB-UniRule"/>
</dbReference>
<dbReference type="GO" id="GO:0006431">
    <property type="term" value="P:methionyl-tRNA aminoacylation"/>
    <property type="evidence" value="ECO:0007669"/>
    <property type="project" value="UniProtKB-UniRule"/>
</dbReference>
<dbReference type="CDD" id="cd07957">
    <property type="entry name" value="Anticodon_Ia_Met"/>
    <property type="match status" value="1"/>
</dbReference>
<dbReference type="CDD" id="cd00814">
    <property type="entry name" value="MetRS_core"/>
    <property type="match status" value="1"/>
</dbReference>
<dbReference type="FunFam" id="2.20.28.20:FF:000001">
    <property type="entry name" value="Methionine--tRNA ligase"/>
    <property type="match status" value="1"/>
</dbReference>
<dbReference type="Gene3D" id="3.40.50.620">
    <property type="entry name" value="HUPs"/>
    <property type="match status" value="1"/>
</dbReference>
<dbReference type="Gene3D" id="1.10.730.10">
    <property type="entry name" value="Isoleucyl-tRNA Synthetase, Domain 1"/>
    <property type="match status" value="1"/>
</dbReference>
<dbReference type="Gene3D" id="2.20.28.20">
    <property type="entry name" value="Methionyl-tRNA synthetase, Zn-domain"/>
    <property type="match status" value="1"/>
</dbReference>
<dbReference type="HAMAP" id="MF_00098">
    <property type="entry name" value="Met_tRNA_synth_type1"/>
    <property type="match status" value="1"/>
</dbReference>
<dbReference type="InterPro" id="IPR041872">
    <property type="entry name" value="Anticodon_Met"/>
</dbReference>
<dbReference type="InterPro" id="IPR023458">
    <property type="entry name" value="Met-tRNA_ligase_1"/>
</dbReference>
<dbReference type="InterPro" id="IPR014758">
    <property type="entry name" value="Met-tRNA_synth"/>
</dbReference>
<dbReference type="InterPro" id="IPR015413">
    <property type="entry name" value="Methionyl/Leucyl_tRNA_Synth"/>
</dbReference>
<dbReference type="InterPro" id="IPR033911">
    <property type="entry name" value="MetRS_core"/>
</dbReference>
<dbReference type="InterPro" id="IPR029038">
    <property type="entry name" value="MetRS_Zn"/>
</dbReference>
<dbReference type="InterPro" id="IPR014729">
    <property type="entry name" value="Rossmann-like_a/b/a_fold"/>
</dbReference>
<dbReference type="InterPro" id="IPR009080">
    <property type="entry name" value="tRNAsynth_Ia_anticodon-bd"/>
</dbReference>
<dbReference type="NCBIfam" id="TIGR00398">
    <property type="entry name" value="metG"/>
    <property type="match status" value="1"/>
</dbReference>
<dbReference type="PANTHER" id="PTHR45765">
    <property type="entry name" value="METHIONINE--TRNA LIGASE"/>
    <property type="match status" value="1"/>
</dbReference>
<dbReference type="PANTHER" id="PTHR45765:SF1">
    <property type="entry name" value="METHIONINE--TRNA LIGASE, CYTOPLASMIC"/>
    <property type="match status" value="1"/>
</dbReference>
<dbReference type="Pfam" id="PF19303">
    <property type="entry name" value="Anticodon_3"/>
    <property type="match status" value="1"/>
</dbReference>
<dbReference type="Pfam" id="PF09334">
    <property type="entry name" value="tRNA-synt_1g"/>
    <property type="match status" value="1"/>
</dbReference>
<dbReference type="PRINTS" id="PR01041">
    <property type="entry name" value="TRNASYNTHMET"/>
</dbReference>
<dbReference type="SUPFAM" id="SSF47323">
    <property type="entry name" value="Anticodon-binding domain of a subclass of class I aminoacyl-tRNA synthetases"/>
    <property type="match status" value="1"/>
</dbReference>
<dbReference type="SUPFAM" id="SSF57770">
    <property type="entry name" value="Methionyl-tRNA synthetase (MetRS), Zn-domain"/>
    <property type="match status" value="1"/>
</dbReference>
<dbReference type="SUPFAM" id="SSF52374">
    <property type="entry name" value="Nucleotidylyl transferase"/>
    <property type="match status" value="1"/>
</dbReference>
<proteinExistence type="inferred from homology"/>
<reference key="1">
    <citation type="journal article" date="2005" name="Genome Res.">
        <title>The Chlamydophila abortus genome sequence reveals an array of variable proteins that contribute to interspecies variation.</title>
        <authorList>
            <person name="Thomson N.R."/>
            <person name="Yeats C."/>
            <person name="Bell K."/>
            <person name="Holden M.T.G."/>
            <person name="Bentley S.D."/>
            <person name="Livingstone M."/>
            <person name="Cerdeno-Tarraga A.-M."/>
            <person name="Harris B."/>
            <person name="Doggett J."/>
            <person name="Ormond D."/>
            <person name="Mungall K."/>
            <person name="Clarke K."/>
            <person name="Feltwell T."/>
            <person name="Hance Z."/>
            <person name="Sanders M."/>
            <person name="Quail M.A."/>
            <person name="Price C."/>
            <person name="Barrell B.G."/>
            <person name="Parkhill J."/>
            <person name="Longbottom D."/>
        </authorList>
    </citation>
    <scope>NUCLEOTIDE SEQUENCE [LARGE SCALE GENOMIC DNA]</scope>
    <source>
        <strain>DSM 27085 / S26/3</strain>
    </source>
</reference>
<evidence type="ECO:0000255" key="1">
    <source>
        <dbReference type="HAMAP-Rule" id="MF_00098"/>
    </source>
</evidence>